<proteinExistence type="evidence at protein level"/>
<evidence type="ECO:0000250" key="1">
    <source>
        <dbReference type="UniProtKB" id="Q9BRS2"/>
    </source>
</evidence>
<evidence type="ECO:0000250" key="2">
    <source>
        <dbReference type="UniProtKB" id="Q9HGN1"/>
    </source>
</evidence>
<evidence type="ECO:0000255" key="3">
    <source>
        <dbReference type="PROSITE-ProRule" id="PRU00159"/>
    </source>
</evidence>
<evidence type="ECO:0000255" key="4">
    <source>
        <dbReference type="PROSITE-ProRule" id="PRU00179"/>
    </source>
</evidence>
<evidence type="ECO:0000256" key="5">
    <source>
        <dbReference type="SAM" id="MobiDB-lite"/>
    </source>
</evidence>
<evidence type="ECO:0000269" key="6">
    <source>
    </source>
</evidence>
<evidence type="ECO:0000269" key="7">
    <source>
    </source>
</evidence>
<evidence type="ECO:0000269" key="8">
    <source>
    </source>
</evidence>
<evidence type="ECO:0000269" key="9">
    <source>
    </source>
</evidence>
<evidence type="ECO:0000269" key="10">
    <source>
    </source>
</evidence>
<evidence type="ECO:0000269" key="11">
    <source>
    </source>
</evidence>
<evidence type="ECO:0000269" key="12">
    <source>
    </source>
</evidence>
<evidence type="ECO:0000269" key="13">
    <source>
    </source>
</evidence>
<evidence type="ECO:0000269" key="14">
    <source>
    </source>
</evidence>
<evidence type="ECO:0000269" key="15">
    <source>
    </source>
</evidence>
<evidence type="ECO:0000269" key="16">
    <source>
    </source>
</evidence>
<evidence type="ECO:0000269" key="17">
    <source>
    </source>
</evidence>
<evidence type="ECO:0000269" key="18">
    <source>
    </source>
</evidence>
<evidence type="ECO:0000269" key="19">
    <source>
    </source>
</evidence>
<evidence type="ECO:0000269" key="20">
    <source>
    </source>
</evidence>
<evidence type="ECO:0000269" key="21">
    <source>
    </source>
</evidence>
<evidence type="ECO:0000269" key="22">
    <source>
    </source>
</evidence>
<evidence type="ECO:0000269" key="23">
    <source>
    </source>
</evidence>
<evidence type="ECO:0000269" key="24">
    <source>
    </source>
</evidence>
<evidence type="ECO:0000269" key="25">
    <source>
    </source>
</evidence>
<evidence type="ECO:0000269" key="26">
    <source>
    </source>
</evidence>
<evidence type="ECO:0000269" key="27">
    <source>
    </source>
</evidence>
<evidence type="ECO:0000269" key="28">
    <source>
    </source>
</evidence>
<evidence type="ECO:0000269" key="29">
    <source>
    </source>
</evidence>
<evidence type="ECO:0000269" key="30">
    <source>
    </source>
</evidence>
<evidence type="ECO:0000269" key="31">
    <source>
    </source>
</evidence>
<evidence type="ECO:0000305" key="32"/>
<evidence type="ECO:0000312" key="33">
    <source>
        <dbReference type="SGD" id="S000002691"/>
    </source>
</evidence>
<evidence type="ECO:0007744" key="34">
    <source>
    </source>
</evidence>
<evidence type="ECO:0007829" key="35">
    <source>
        <dbReference type="PDB" id="1ZXE"/>
    </source>
</evidence>
<evidence type="ECO:0007829" key="36">
    <source>
        <dbReference type="PDB" id="1ZY4"/>
    </source>
</evidence>
<evidence type="ECO:0007829" key="37">
    <source>
        <dbReference type="PDB" id="1ZYC"/>
    </source>
</evidence>
<evidence type="ECO:0007829" key="38">
    <source>
        <dbReference type="PDB" id="2YZ0"/>
    </source>
</evidence>
<evidence type="ECO:0007829" key="39">
    <source>
        <dbReference type="PDB" id="4OTM"/>
    </source>
</evidence>
<comment type="function">
    <text evidence="6 8 9 12 16 17 20 22 23 24 25 26 27 28 29 30">Metabolic-stress sensing protein kinase that phosphorylates the alpha subunit of eukaryotic translation initiation factor 2 (eIF-2-alpha/SUI2) on 'Ser-52' in response to low amino acid, carbon, or purine availability (PubMed:10733573, PubMed:10983975, PubMed:17202131, PubMed:1739968, PubMed:33338396, PubMed:7623840, PubMed:8336737, PubMed:8798780, PubMed:9528799). Required for adapatation to nutrient starvation by acting as a key component of the integrated stress response (ISR), by which cells alter their translational and transcriptional output in response to starvation (PubMed:10733573, PubMed:10983975, PubMed:17202131, PubMed:1739968, PubMed:33338396, PubMed:7623840, PubMed:8336737, PubMed:8798780, PubMed:9528799). Converts phosphorylated eIF-2-alpha/SUI2 either to a competitive inhibitor of translation initiation factor eIF-2B, leading to a global protein synthesis repression, and thus to a reduced overall utilization of amino acids, or to a translational initiation activation of specific mRNAs, such as the transcriptional activator GCN4, and hence allowing GCN4-mediated reprogramming of transcription to alleviate nutrient depletion (PubMed:10733573, PubMed:10801780, PubMed:11350982, PubMed:1739968, PubMed:2188100, PubMed:24333428, PubMed:2660141, PubMed:33338396, PubMed:7621831, PubMed:7623840, PubMed:8798780). Binds uncharged tRNAs (PubMed:10983975, PubMed:7623840). Binds to aminoacylated tRNA(Phe) less tightly than to deacylated tRNA(Phe) (PubMed:10983975). Binds to double-stranded RNA (PubMed:9430731).</text>
</comment>
<comment type="catalytic activity">
    <reaction evidence="9 16 20 26 28">
        <text>L-seryl-[protein] + ATP = O-phospho-L-seryl-[protein] + ADP + H(+)</text>
        <dbReference type="Rhea" id="RHEA:17989"/>
        <dbReference type="Rhea" id="RHEA-COMP:9863"/>
        <dbReference type="Rhea" id="RHEA-COMP:11604"/>
        <dbReference type="ChEBI" id="CHEBI:15378"/>
        <dbReference type="ChEBI" id="CHEBI:29999"/>
        <dbReference type="ChEBI" id="CHEBI:30616"/>
        <dbReference type="ChEBI" id="CHEBI:83421"/>
        <dbReference type="ChEBI" id="CHEBI:456216"/>
        <dbReference type="EC" id="2.7.11.1"/>
    </reaction>
</comment>
<comment type="catalytic activity">
    <reaction evidence="9 16 20 26 28">
        <text>L-threonyl-[protein] + ATP = O-phospho-L-threonyl-[protein] + ADP + H(+)</text>
        <dbReference type="Rhea" id="RHEA:46608"/>
        <dbReference type="Rhea" id="RHEA-COMP:11060"/>
        <dbReference type="Rhea" id="RHEA-COMP:11605"/>
        <dbReference type="ChEBI" id="CHEBI:15378"/>
        <dbReference type="ChEBI" id="CHEBI:30013"/>
        <dbReference type="ChEBI" id="CHEBI:30616"/>
        <dbReference type="ChEBI" id="CHEBI:61977"/>
        <dbReference type="ChEBI" id="CHEBI:456216"/>
        <dbReference type="EC" id="2.7.11.1"/>
    </reaction>
</comment>
<comment type="cofactor">
    <cofactor evidence="16">
        <name>Mg(2+)</name>
        <dbReference type="ChEBI" id="CHEBI:18420"/>
    </cofactor>
</comment>
<comment type="activity regulation">
    <text evidence="24 26">The integrated stress response (ISR) is activated in response to conditions that promote ribosome collisions: GCN1, which acts as a ribosome collision sensor, activates GCN2 (PubMed:33338396). The RQC pathway and the integrated stress response (ISR) antagonize each other: HEL2 prevents the activation of GCN2, while GCN2 suppresses RQC activation (PubMed:33338396). Ribosome stalling-induced integrated stress response prefers ribosomes with empty A sites (PubMed:33338396). The kinase activity is stimulated upon binding to uncharged tRNAs (PubMed:7623840).</text>
</comment>
<comment type="subunit">
    <text evidence="7 8 9 10 11 12 15 16 18 19 21 29 31">Homodimer; homodimerization is important for kinase activation by uncharged tRNAs (PubMed:10983975, PubMed:11250908, PubMed:15964839, PubMed:17202131, PubMed:9566889). Interacts (via N-terminal RWD domain) with GCN1 (via N- and C-terminus); this interaction stimulates GCN2 kinase activity in a GCN20-dependent manner in response to amino acid starvation (PubMed:10775272, PubMed:10801780, PubMed:11101534, PubMed:11350982, PubMed:21849502). Interacts (via N-terminus) with the GCN1-GCN20 complex on translating ribosomes in amino acid-starved cells; GCN1 may bind near the ribosomal A-site and promotes the transfer of uncharged tRNAs from the A-site to the tRNA-binding domain in GCN2 for its subsequent kinase activation, and hence allowing GCN4 translational activation and derepression of amino acid biosynthetic genes (PubMed:10775272, PubMed:11101534). Interacts (via C-terminus) with TIF11; this interaction is direct, occurs in amino acid-repleted cells, may be stabilized in a ribosome-dependent manner, reduces GCN2-mediated eIF-2-alpha phosphorylation but not GCN2 autophosphorylation and is lost in amino acid-starved cells and by uncharged tRNAs (PubMed:21849502). Associates (via C-terminus) with ribosomes (PubMed:10983975, PubMed:2038314, PubMed:22888004, PubMed:9430731).</text>
</comment>
<comment type="interaction">
    <interactant intactId="EBI-330">
        <id>P15442</id>
    </interactant>
    <interactant intactId="EBI-8536">
        <id>P29295</id>
        <label>HRR25</label>
    </interactant>
    <organismsDiffer>false</organismsDiffer>
    <experiments>5</experiments>
</comment>
<comment type="interaction">
    <interactant intactId="EBI-330">
        <id>P15442</id>
    </interactant>
    <interactant intactId="EBI-12207">
        <id>P22211</id>
        <label>NPR1</label>
    </interactant>
    <organismsDiffer>false</organismsDiffer>
    <experiments>2</experiments>
</comment>
<comment type="subcellular location">
    <subcellularLocation>
        <location evidence="18">Cytoplasm</location>
    </subcellularLocation>
</comment>
<comment type="domain">
    <text evidence="9 11 26 28 29 31">The C-terminal domain negatively regulates kinase activity via an autoinhibitory association with the protein kinase and histidyl-tRNA synthetase-like domains in amino acid-repleted cells, that is counteracted by uncharged tRNAs in amino acid-starved cells (PubMed:10983975, PubMed:11250908, PubMed:7623840, PubMed:8798780). The C-terminal, histidyl-tRNA synthetase-like region and protein kinase domains are necessary for homodimer formation (PubMed:10983975, PubMed:11250908, PubMed:9566889). The C-terminal and protein kinase domains are necessary for ribosome association (PubMed:10983975, PubMed:9566889). The C-terminal and histidyl-tRNA synthetase-like regions are required for uncharged tRNAs binding in amino acid-starved cells (PubMed:10983975, PubMed:7623840, PubMed:8798780, PubMed:9430731).</text>
</comment>
<comment type="PTM">
    <text evidence="9 16 18 20 28 30">Autophosphorylated, autophosphorylation on Thr-882 and Thr-887 increases kinase activity.</text>
</comment>
<comment type="disruption phenotype">
    <text evidence="6 27">Abolishes phosphorylation of the alpha subunit of eukaryotic translation initiation factor 2 (eIF-2-alpha/SUI2) during amino acid, purine, and glucose starvation (PubMed:10733573, PubMed:8336737). Inhibits GCN4 derepression in glucose, amino acid, or purine-starved cells (PubMed:10733573, PubMed:8336737). Decreases vacuolar free amino acid levels during glucose starvation (PubMed:10733573). Sensitive to the purine analog 8-azaadenine (PubMed:8336737). Increases duration of lag phase on return to glucose-rich medium following glucose starvation (PubMed:10733573).</text>
</comment>
<comment type="miscellaneous">
    <text evidence="14">Present with 279 molecules/cell in log phase SD medium.</text>
</comment>
<comment type="similarity">
    <text evidence="3">Belongs to the protein kinase superfamily. Ser/Thr protein kinase family. GCN2 subfamily.</text>
</comment>
<comment type="sequence caution" evidence="32">
    <conflict type="erroneous initiation">
        <sequence resource="EMBL-CDS" id="AAA34636"/>
    </conflict>
</comment>
<comment type="sequence caution" evidence="32">
    <conflict type="frameshift">
        <sequence resource="EMBL-CDS" id="AAA34881"/>
    </conflict>
</comment>
<protein>
    <recommendedName>
        <fullName evidence="2">eIF-2-alpha kinase GCN2</fullName>
        <ecNumber evidence="9 16 20 26 28">2.7.11.1</ecNumber>
    </recommendedName>
    <alternativeName>
        <fullName evidence="33">General control non-derepressible protein 2</fullName>
    </alternativeName>
    <alternativeName>
        <fullName evidence="32">Serine/threonine-protein kinase GCN2</fullName>
    </alternativeName>
</protein>
<gene>
    <name evidence="33" type="primary">GCN2</name>
    <name evidence="33" type="synonym">AAS1</name>
    <name type="ordered locus">YDR283C</name>
</gene>
<name>GCN2_YEAST</name>
<accession>P15442</accession>
<accession>D6VSR3</accession>
<sequence>MSLSHLTLDQYYEIQCNELEAIRSIYMDDFTDLTKRKSSWDKQPQIIFEITLRSVDKEPVESSITLHFAMTPMYPYTAPEIEFKNVQNVMDSQLQMLKSEFKKIHNTSRGQEIIFEITSFTQEKLDEFQNVVNTQSLEDDRLQRIKETKEQLEKEEREKQQETIKKRSDEQRRIDEIVQRELEKRQDDDDDLLFNRTTQLDLQPPSEWVASGEAIVFSKTIKAKLPNNSMFKFKAVVNPKPIKLTSDIFSFSKQFLVKPYIPPESPLADFLMSSEMMENFYYLLSEIELDNSYFNTSNGKKEIANLEKELETVLKAKHDNVNRLFGYTVERMGRNNATFVWKIRLLTEYCNYYPLGDLIQSVGFVNLATARIWMIRLLEGLEAIHKLGIVHKCINLETVILVKDADFGSTIPKLVHSTYGYTVLNMLSRYPNKNGSSVELSPSTWIAPELLKFNNAKPQRLTDIWQLGVLFIQIISGSDIVMNFETPQEFLDSTSMDETLYDLLSKMLNNDPKKRLGTLELLPMKFLRTNIDSTINRFNLVSESVNSNSLELTPGDTITVRGNGGRTLSQSSIRRRSFNVGSRFSSINPATRSRYASDFEEIAVLGQGAFGQVVKARNALDSRYYAIKKIRHTEEKLSTILSEVMLLASLNHQYVVRYYAAWLEEDSMDENVFESTDEESDLSESSSDFEENDLLDQSSIFKNRTNHDLDNSNWDFISGSGYPDIVFENSSRDDENEDLDHDTSSTSSSESQDDTDKESKSIQNVPRRRNFVKPMTAVKKKSTLFIQMEYCENRTLYDLIHSENLNQQRDEYWRLFRQILEALSYIHSQGIIHRDLKPMNIFIDESRNVKIGDFGLAKNVHRSLDILKLDSQNLPGSSDNLTSAIGTAMYVATEVLDGTGHYNEKIDMYSLGIIFFEMIYPFSTGMERVNILKKLRSVSIEFPPDFDDNKMKVEKKIIRLLIDHDPNKRPGARTLLNSGWLPVKHQDEVIKEALKSLSNPSSPWQQQVRESLFNQSYSLTNDILFDNSVPTSTPFANILRSQMTEEVVKIFRKHGGIENNAPPRIFPKAPIYGTQNVYEVLDKGGTVLQLQYDLTYPMARYLSKNPSLISKQYRMQHVYRPPDHSRSSLEPRKFGEIDFDIISKSSSESGFYDAESLKIIDEILTVFPVFEKTNTFFILNHADILESVFNFTNIDKAQRPLVSRMLSQVGFARSFKEVKNELKAQLNISSTALNDLELFDFRLDFEAAKKRLYKLMIDSPHLKKIEDSLSHISKVLSYLKPLEVARNVVISPLSNYNSAFYKGGIMFHAVYDDGSSRNMIAAGGRYDTLISFFARPSGKKSSNTRKAVGFNLAWETIFGIAQNYFKLASGNRIKKRNRFLKDTAVDWKPSRCDVLISSFSNSLLDTIGVTILNTLWKQNIKADMLRDCSSVDDVVTGAQQDGIDWILLIKQQAYPLTNHKRKYKPLKIKKLSTNVDIDLDLDEFLTLYQQETGNKSLINDSLTLGDKADEFKRWDENSSAGSSQEGDIDDVVAGSTNNQKVIYVPNMATRSKKANKREKWVYEDAARNSSNMILHNLSNAPIITVDALRDETLEIISITSLAQKEEWLRKVFGSGNNSTPRSFATSIYNNLSKEAHKGNRWAILYCHKTGKSSVIDLQR</sequence>
<dbReference type="EC" id="2.7.11.1" evidence="9 16 20 26 28"/>
<dbReference type="EMBL" id="M27082">
    <property type="protein sequence ID" value="AAA34636.1"/>
    <property type="status" value="ALT_INIT"/>
    <property type="molecule type" value="Genomic_DNA"/>
</dbReference>
<dbReference type="EMBL" id="U51030">
    <property type="protein sequence ID" value="AAB64461.1"/>
    <property type="molecule type" value="Genomic_DNA"/>
</dbReference>
<dbReference type="EMBL" id="M20487">
    <property type="protein sequence ID" value="AAA34881.1"/>
    <property type="status" value="ALT_SEQ"/>
    <property type="molecule type" value="Genomic_DNA"/>
</dbReference>
<dbReference type="EMBL" id="BK006938">
    <property type="protein sequence ID" value="DAA12123.1"/>
    <property type="molecule type" value="Genomic_DNA"/>
</dbReference>
<dbReference type="PIR" id="S70139">
    <property type="entry name" value="OKBYN2"/>
</dbReference>
<dbReference type="RefSeq" id="NP_010569.3">
    <property type="nucleotide sequence ID" value="NM_001180591.3"/>
</dbReference>
<dbReference type="PDB" id="1ZXE">
    <property type="method" value="X-ray"/>
    <property type="resolution" value="2.60 A"/>
    <property type="chains" value="A/B/C/D/E/F=594-997"/>
</dbReference>
<dbReference type="PDB" id="1ZY4">
    <property type="method" value="X-ray"/>
    <property type="resolution" value="1.95 A"/>
    <property type="chains" value="A/B=594-997"/>
</dbReference>
<dbReference type="PDB" id="1ZY5">
    <property type="method" value="X-ray"/>
    <property type="resolution" value="2.00 A"/>
    <property type="chains" value="A/B=594-997"/>
</dbReference>
<dbReference type="PDB" id="1ZYC">
    <property type="method" value="X-ray"/>
    <property type="resolution" value="3.00 A"/>
    <property type="chains" value="A/B/C/D=594-997"/>
</dbReference>
<dbReference type="PDB" id="1ZYD">
    <property type="method" value="X-ray"/>
    <property type="resolution" value="2.75 A"/>
    <property type="chains" value="A/B=594-997"/>
</dbReference>
<dbReference type="PDB" id="2YZ0">
    <property type="method" value="NMR"/>
    <property type="chains" value="A=1-138"/>
</dbReference>
<dbReference type="PDB" id="4OTM">
    <property type="method" value="X-ray"/>
    <property type="resolution" value="1.95 A"/>
    <property type="chains" value="A/B=1519-1659"/>
</dbReference>
<dbReference type="PDBsum" id="1ZXE"/>
<dbReference type="PDBsum" id="1ZY4"/>
<dbReference type="PDBsum" id="1ZY5"/>
<dbReference type="PDBsum" id="1ZYC"/>
<dbReference type="PDBsum" id="1ZYD"/>
<dbReference type="PDBsum" id="2YZ0"/>
<dbReference type="PDBsum" id="4OTM"/>
<dbReference type="SMR" id="P15442"/>
<dbReference type="BioGRID" id="32336">
    <property type="interactions" value="257"/>
</dbReference>
<dbReference type="DIP" id="DIP-2346N"/>
<dbReference type="FunCoup" id="P15442">
    <property type="interactions" value="1007"/>
</dbReference>
<dbReference type="IntAct" id="P15442">
    <property type="interactions" value="30"/>
</dbReference>
<dbReference type="MINT" id="P15442"/>
<dbReference type="STRING" id="4932.YDR283C"/>
<dbReference type="iPTMnet" id="P15442"/>
<dbReference type="PaxDb" id="4932-YDR283C"/>
<dbReference type="PeptideAtlas" id="P15442"/>
<dbReference type="EnsemblFungi" id="YDR283C_mRNA">
    <property type="protein sequence ID" value="YDR283C"/>
    <property type="gene ID" value="YDR283C"/>
</dbReference>
<dbReference type="GeneID" id="851877"/>
<dbReference type="KEGG" id="sce:YDR283C"/>
<dbReference type="AGR" id="SGD:S000002691"/>
<dbReference type="SGD" id="S000002691">
    <property type="gene designation" value="GCN2"/>
</dbReference>
<dbReference type="VEuPathDB" id="FungiDB:YDR283C"/>
<dbReference type="eggNOG" id="KOG1035">
    <property type="taxonomic scope" value="Eukaryota"/>
</dbReference>
<dbReference type="GeneTree" id="ENSGT00940000158121"/>
<dbReference type="HOGENOM" id="CLU_001222_2_0_1"/>
<dbReference type="InParanoid" id="P15442"/>
<dbReference type="OMA" id="FEDIAWD"/>
<dbReference type="OrthoDB" id="341578at2759"/>
<dbReference type="BioCyc" id="YEAST:G3O-29848-MONOMER"/>
<dbReference type="BRENDA" id="2.7.11.20">
    <property type="organism ID" value="984"/>
</dbReference>
<dbReference type="BioGRID-ORCS" id="851877">
    <property type="hits" value="0 hits in 13 CRISPR screens"/>
</dbReference>
<dbReference type="EvolutionaryTrace" id="P15442"/>
<dbReference type="PRO" id="PR:P15442"/>
<dbReference type="Proteomes" id="UP000002311">
    <property type="component" value="Chromosome IV"/>
</dbReference>
<dbReference type="RNAct" id="P15442">
    <property type="molecule type" value="protein"/>
</dbReference>
<dbReference type="GO" id="GO:0005737">
    <property type="term" value="C:cytoplasm"/>
    <property type="evidence" value="ECO:0000318"/>
    <property type="project" value="GO_Central"/>
</dbReference>
<dbReference type="GO" id="GO:0005829">
    <property type="term" value="C:cytosol"/>
    <property type="evidence" value="ECO:0000318"/>
    <property type="project" value="GO_Central"/>
</dbReference>
<dbReference type="GO" id="GO:0022626">
    <property type="term" value="C:cytosolic ribosome"/>
    <property type="evidence" value="ECO:0000314"/>
    <property type="project" value="SGD"/>
</dbReference>
<dbReference type="GO" id="GO:0015934">
    <property type="term" value="C:large ribosomal subunit"/>
    <property type="evidence" value="ECO:0000314"/>
    <property type="project" value="UniProtKB"/>
</dbReference>
<dbReference type="GO" id="GO:0005634">
    <property type="term" value="C:nucleus"/>
    <property type="evidence" value="ECO:0000318"/>
    <property type="project" value="GO_Central"/>
</dbReference>
<dbReference type="GO" id="GO:0015935">
    <property type="term" value="C:small ribosomal subunit"/>
    <property type="evidence" value="ECO:0000314"/>
    <property type="project" value="UniProtKB"/>
</dbReference>
<dbReference type="GO" id="GO:0005524">
    <property type="term" value="F:ATP binding"/>
    <property type="evidence" value="ECO:0007669"/>
    <property type="project" value="UniProtKB-KW"/>
</dbReference>
<dbReference type="GO" id="GO:0003725">
    <property type="term" value="F:double-stranded RNA binding"/>
    <property type="evidence" value="ECO:0000314"/>
    <property type="project" value="UniProtKB"/>
</dbReference>
<dbReference type="GO" id="GO:0004694">
    <property type="term" value="F:eukaryotic translation initiation factor 2alpha kinase activity"/>
    <property type="evidence" value="ECO:0000314"/>
    <property type="project" value="UniProtKB"/>
</dbReference>
<dbReference type="GO" id="GO:0042803">
    <property type="term" value="F:protein homodimerization activity"/>
    <property type="evidence" value="ECO:0000314"/>
    <property type="project" value="UniProtKB"/>
</dbReference>
<dbReference type="GO" id="GO:0004672">
    <property type="term" value="F:protein kinase activity"/>
    <property type="evidence" value="ECO:0000314"/>
    <property type="project" value="UniProtKB"/>
</dbReference>
<dbReference type="GO" id="GO:0004860">
    <property type="term" value="F:protein kinase inhibitor activity"/>
    <property type="evidence" value="ECO:0000315"/>
    <property type="project" value="CACAO"/>
</dbReference>
<dbReference type="GO" id="GO:0106310">
    <property type="term" value="F:protein serine kinase activity"/>
    <property type="evidence" value="ECO:0007669"/>
    <property type="project" value="RHEA"/>
</dbReference>
<dbReference type="GO" id="GO:0043023">
    <property type="term" value="F:ribosomal large subunit binding"/>
    <property type="evidence" value="ECO:0000314"/>
    <property type="project" value="UniProtKB"/>
</dbReference>
<dbReference type="GO" id="GO:0043022">
    <property type="term" value="F:ribosome binding"/>
    <property type="evidence" value="ECO:0000314"/>
    <property type="project" value="UniProtKB"/>
</dbReference>
<dbReference type="GO" id="GO:0031369">
    <property type="term" value="F:translation initiation factor binding"/>
    <property type="evidence" value="ECO:0000353"/>
    <property type="project" value="UniProtKB"/>
</dbReference>
<dbReference type="GO" id="GO:0000049">
    <property type="term" value="F:tRNA binding"/>
    <property type="evidence" value="ECO:0000314"/>
    <property type="project" value="UniProtKB"/>
</dbReference>
<dbReference type="GO" id="GO:0034198">
    <property type="term" value="P:cellular response to amino acid starvation"/>
    <property type="evidence" value="ECO:0000314"/>
    <property type="project" value="UniProtKB"/>
</dbReference>
<dbReference type="GO" id="GO:0071232">
    <property type="term" value="P:cellular response to histidine"/>
    <property type="evidence" value="ECO:0000314"/>
    <property type="project" value="UniProtKB"/>
</dbReference>
<dbReference type="GO" id="GO:0000077">
    <property type="term" value="P:DNA damage checkpoint signaling"/>
    <property type="evidence" value="ECO:0000315"/>
    <property type="project" value="SGD"/>
</dbReference>
<dbReference type="GO" id="GO:0140469">
    <property type="term" value="P:GCN2-mediated signaling"/>
    <property type="evidence" value="ECO:0000314"/>
    <property type="project" value="UniProtKB"/>
</dbReference>
<dbReference type="GO" id="GO:0035556">
    <property type="term" value="P:intracellular signal transduction"/>
    <property type="evidence" value="ECO:0000315"/>
    <property type="project" value="UniProtKB"/>
</dbReference>
<dbReference type="GO" id="GO:0032057">
    <property type="term" value="P:negative regulation of translational initiation in response to stress"/>
    <property type="evidence" value="ECO:0000318"/>
    <property type="project" value="GO_Central"/>
</dbReference>
<dbReference type="GO" id="GO:1903833">
    <property type="term" value="P:positive regulation of cellular response to amino acid starvation"/>
    <property type="evidence" value="ECO:0000314"/>
    <property type="project" value="UniProtKB"/>
</dbReference>
<dbReference type="GO" id="GO:0071264">
    <property type="term" value="P:positive regulation of translational initiation in response to starvation"/>
    <property type="evidence" value="ECO:0000314"/>
    <property type="project" value="UniProtKB"/>
</dbReference>
<dbReference type="GO" id="GO:0046777">
    <property type="term" value="P:protein autophosphorylation"/>
    <property type="evidence" value="ECO:0000314"/>
    <property type="project" value="UniProtKB"/>
</dbReference>
<dbReference type="GO" id="GO:0006468">
    <property type="term" value="P:protein phosphorylation"/>
    <property type="evidence" value="ECO:0000314"/>
    <property type="project" value="UniProtKB"/>
</dbReference>
<dbReference type="GO" id="GO:1990611">
    <property type="term" value="P:regulation of cytoplasmic translational initiation in response to stress"/>
    <property type="evidence" value="ECO:0000315"/>
    <property type="project" value="UniProtKB"/>
</dbReference>
<dbReference type="GO" id="GO:0006446">
    <property type="term" value="P:regulation of translational initiation"/>
    <property type="evidence" value="ECO:0000314"/>
    <property type="project" value="UniProtKB"/>
</dbReference>
<dbReference type="GO" id="GO:0006412">
    <property type="term" value="P:translation"/>
    <property type="evidence" value="ECO:0007669"/>
    <property type="project" value="UniProtKB-KW"/>
</dbReference>
<dbReference type="CDD" id="cd00773">
    <property type="entry name" value="HisRS-like_core"/>
    <property type="match status" value="1"/>
</dbReference>
<dbReference type="CDD" id="cd14012">
    <property type="entry name" value="PK_eIF2AK_GCN2_rpt1"/>
    <property type="match status" value="1"/>
</dbReference>
<dbReference type="CDD" id="cd23823">
    <property type="entry name" value="RWD_GCN2"/>
    <property type="match status" value="1"/>
</dbReference>
<dbReference type="CDD" id="cd14046">
    <property type="entry name" value="STKc_EIF2AK4_GCN2_rpt2"/>
    <property type="match status" value="1"/>
</dbReference>
<dbReference type="DisProt" id="DP02767"/>
<dbReference type="FunFam" id="1.10.510.10:FF:000856">
    <property type="entry name" value="eIF-2-alpha kinase GCN2"/>
    <property type="match status" value="1"/>
</dbReference>
<dbReference type="FunFam" id="1.10.510.10:FF:001061">
    <property type="entry name" value="eIF-2-alpha kinase GCN2"/>
    <property type="match status" value="1"/>
</dbReference>
<dbReference type="FunFam" id="3.10.110.10:FF:000050">
    <property type="entry name" value="eIF-2-alpha kinase GCN2"/>
    <property type="match status" value="1"/>
</dbReference>
<dbReference type="FunFam" id="3.30.200.20:FF:000379">
    <property type="entry name" value="eIF-2-alpha kinase GCN2"/>
    <property type="match status" value="1"/>
</dbReference>
<dbReference type="FunFam" id="3.30.930.10:FF:000135">
    <property type="entry name" value="GCN2p Protein kinase"/>
    <property type="match status" value="1"/>
</dbReference>
<dbReference type="FunFam" id="3.40.50.800:FF:000037">
    <property type="entry name" value="GCN2p Protein kinase"/>
    <property type="match status" value="1"/>
</dbReference>
<dbReference type="Gene3D" id="3.40.50.800">
    <property type="entry name" value="Anticodon-binding domain"/>
    <property type="match status" value="1"/>
</dbReference>
<dbReference type="Gene3D" id="3.30.930.10">
    <property type="entry name" value="Bira Bifunctional Protein, Domain 2"/>
    <property type="match status" value="1"/>
</dbReference>
<dbReference type="Gene3D" id="3.30.200.20">
    <property type="entry name" value="Phosphorylase Kinase, domain 1"/>
    <property type="match status" value="1"/>
</dbReference>
<dbReference type="Gene3D" id="1.10.510.10">
    <property type="entry name" value="Transferase(Phosphotransferase) domain 1"/>
    <property type="match status" value="2"/>
</dbReference>
<dbReference type="Gene3D" id="3.10.110.10">
    <property type="entry name" value="Ubiquitin Conjugating Enzyme"/>
    <property type="match status" value="1"/>
</dbReference>
<dbReference type="InterPro" id="IPR045864">
    <property type="entry name" value="aa-tRNA-synth_II/BPL/LPL"/>
</dbReference>
<dbReference type="InterPro" id="IPR036621">
    <property type="entry name" value="Anticodon-bd_dom_sf"/>
</dbReference>
<dbReference type="InterPro" id="IPR050339">
    <property type="entry name" value="CC_SR_Kinase"/>
</dbReference>
<dbReference type="InterPro" id="IPR016255">
    <property type="entry name" value="Gcn2"/>
</dbReference>
<dbReference type="InterPro" id="IPR041715">
    <property type="entry name" value="HisRS-like_core"/>
</dbReference>
<dbReference type="InterPro" id="IPR024435">
    <property type="entry name" value="HisRS-related_dom"/>
</dbReference>
<dbReference type="InterPro" id="IPR011009">
    <property type="entry name" value="Kinase-like_dom_sf"/>
</dbReference>
<dbReference type="InterPro" id="IPR000719">
    <property type="entry name" value="Prot_kinase_dom"/>
</dbReference>
<dbReference type="InterPro" id="IPR017441">
    <property type="entry name" value="Protein_kinase_ATP_BS"/>
</dbReference>
<dbReference type="InterPro" id="IPR006575">
    <property type="entry name" value="RWD_dom"/>
</dbReference>
<dbReference type="InterPro" id="IPR008271">
    <property type="entry name" value="Ser/Thr_kinase_AS"/>
</dbReference>
<dbReference type="InterPro" id="IPR016135">
    <property type="entry name" value="UBQ-conjugating_enzyme/RWD"/>
</dbReference>
<dbReference type="PANTHER" id="PTHR11042">
    <property type="entry name" value="EUKARYOTIC TRANSLATION INITIATION FACTOR 2-ALPHA KINASE EIF2-ALPHA KINASE -RELATED"/>
    <property type="match status" value="1"/>
</dbReference>
<dbReference type="PANTHER" id="PTHR11042:SF190">
    <property type="entry name" value="MITOSIS INHIBITOR PROTEIN KINASE MIK1"/>
    <property type="match status" value="1"/>
</dbReference>
<dbReference type="Pfam" id="PF12745">
    <property type="entry name" value="HGTP_anticodon2"/>
    <property type="match status" value="1"/>
</dbReference>
<dbReference type="Pfam" id="PF00069">
    <property type="entry name" value="Pkinase"/>
    <property type="match status" value="3"/>
</dbReference>
<dbReference type="Pfam" id="PF05773">
    <property type="entry name" value="RWD"/>
    <property type="match status" value="1"/>
</dbReference>
<dbReference type="Pfam" id="PF13393">
    <property type="entry name" value="tRNA-synt_His"/>
    <property type="match status" value="1"/>
</dbReference>
<dbReference type="PIRSF" id="PIRSF000660">
    <property type="entry name" value="Ser/Thr_PK_GCN2"/>
    <property type="match status" value="1"/>
</dbReference>
<dbReference type="SMART" id="SM00591">
    <property type="entry name" value="RWD"/>
    <property type="match status" value="1"/>
</dbReference>
<dbReference type="SMART" id="SM00220">
    <property type="entry name" value="S_TKc"/>
    <property type="match status" value="1"/>
</dbReference>
<dbReference type="SUPFAM" id="SSF55681">
    <property type="entry name" value="Class II aaRS and biotin synthetases"/>
    <property type="match status" value="1"/>
</dbReference>
<dbReference type="SUPFAM" id="SSF56112">
    <property type="entry name" value="Protein kinase-like (PK-like)"/>
    <property type="match status" value="2"/>
</dbReference>
<dbReference type="SUPFAM" id="SSF54495">
    <property type="entry name" value="UBC-like"/>
    <property type="match status" value="1"/>
</dbReference>
<dbReference type="PROSITE" id="PS00107">
    <property type="entry name" value="PROTEIN_KINASE_ATP"/>
    <property type="match status" value="1"/>
</dbReference>
<dbReference type="PROSITE" id="PS50011">
    <property type="entry name" value="PROTEIN_KINASE_DOM"/>
    <property type="match status" value="2"/>
</dbReference>
<dbReference type="PROSITE" id="PS00108">
    <property type="entry name" value="PROTEIN_KINASE_ST"/>
    <property type="match status" value="1"/>
</dbReference>
<dbReference type="PROSITE" id="PS50908">
    <property type="entry name" value="RWD"/>
    <property type="match status" value="1"/>
</dbReference>
<organism>
    <name type="scientific">Saccharomyces cerevisiae (strain ATCC 204508 / S288c)</name>
    <name type="common">Baker's yeast</name>
    <dbReference type="NCBI Taxonomy" id="559292"/>
    <lineage>
        <taxon>Eukaryota</taxon>
        <taxon>Fungi</taxon>
        <taxon>Dikarya</taxon>
        <taxon>Ascomycota</taxon>
        <taxon>Saccharomycotina</taxon>
        <taxon>Saccharomycetes</taxon>
        <taxon>Saccharomycetales</taxon>
        <taxon>Saccharomycetaceae</taxon>
        <taxon>Saccharomyces</taxon>
    </lineage>
</organism>
<feature type="chain" id="PRO_0000085963" description="eIF-2-alpha kinase GCN2">
    <location>
        <begin position="1"/>
        <end position="1659"/>
    </location>
</feature>
<feature type="domain" description="RWD" evidence="4">
    <location>
        <begin position="17"/>
        <end position="128"/>
    </location>
</feature>
<feature type="domain" description="Protein kinase 1" evidence="3">
    <location>
        <begin position="256"/>
        <end position="527"/>
    </location>
</feature>
<feature type="domain" description="Protein kinase 2" evidence="3">
    <location>
        <begin position="599"/>
        <end position="981"/>
    </location>
</feature>
<feature type="region of interest" description="Disordered" evidence="5">
    <location>
        <begin position="149"/>
        <end position="170"/>
    </location>
</feature>
<feature type="region of interest" description="Disordered" evidence="5">
    <location>
        <begin position="671"/>
        <end position="691"/>
    </location>
</feature>
<feature type="region of interest" description="Disordered" evidence="5">
    <location>
        <begin position="727"/>
        <end position="768"/>
    </location>
</feature>
<feature type="region of interest" description="Histidyl-tRNA synthetase-like">
    <location>
        <begin position="999"/>
        <end position="1519"/>
    </location>
</feature>
<feature type="active site" description="Proton acceptor" evidence="1">
    <location>
        <position position="835"/>
    </location>
</feature>
<feature type="binding site" evidence="3">
    <location>
        <begin position="605"/>
        <end position="613"/>
    </location>
    <ligand>
        <name>ATP</name>
        <dbReference type="ChEBI" id="CHEBI:30616"/>
    </ligand>
</feature>
<feature type="binding site" evidence="3">
    <location>
        <position position="628"/>
    </location>
    <ligand>
        <name>ATP</name>
        <dbReference type="ChEBI" id="CHEBI:30616"/>
    </ligand>
</feature>
<feature type="modified residue" description="Phosphoserine" evidence="34">
    <location>
        <position position="761"/>
    </location>
</feature>
<feature type="modified residue" description="Phosphothreonine; by autocatalysis" evidence="30">
    <location>
        <position position="882"/>
    </location>
</feature>
<feature type="modified residue" description="Phosphothreonine; by autocatalysis" evidence="30">
    <location>
        <position position="887"/>
    </location>
</feature>
<feature type="mutagenesis site" description="Inhibits interaction with GCN1, eIF-2-alpha phosphorylation and fails to derepress GCN4 translation in amino acid-starved cells." evidence="8 12">
    <original>Y</original>
    <variation>A</variation>
    <location>
        <position position="74"/>
    </location>
</feature>
<feature type="mutagenesis site" description="Increases the constitutive kinase activity and induces derepression of GCN4 translation and amino acid biosynthetic genes in absence of amino acid starvation." evidence="13">
    <original>S</original>
    <variation>F</variation>
    <location>
        <position position="582"/>
    </location>
</feature>
<feature type="mutagenesis site" description="Inhibits autophosphorylation, eIF-2-alpha kinase activity and derepression of GCN4 translation. Restores eIF-2-alpha kinase activity and derepression of GCN4, but not autophosphorylation; when associated with R-598." evidence="16">
    <original>R</original>
    <variation>D</variation>
    <location>
        <position position="594"/>
    </location>
</feature>
<feature type="mutagenesis site" description="Inhibits autophosphorylation, eIF-2-alpha kinase activity and derepression of GCN4 translation. Restores eIF-2-alpha kinase activity and derepression of GCN4, but not autophosphorylation; when associated with D-594." evidence="16">
    <original>D</original>
    <variation>R</variation>
    <location>
        <position position="598"/>
    </location>
</feature>
<feature type="mutagenesis site" description="Increases the constitutive kinase activity in absence of amino acid starvation." evidence="20">
    <original>E</original>
    <variation>K</variation>
    <location>
        <position position="601"/>
    </location>
</feature>
<feature type="mutagenesis site" description="Inhibits autophosphorylation, eIF-2-alpha kinase activity and derepression of GCN4 translation in amino acid-starved cells." evidence="6 9 16 17 20 23 28">
    <original>K</original>
    <variation>V</variation>
    <variation>R</variation>
    <location>
        <position position="628"/>
    </location>
</feature>
<feature type="mutagenesis site" description="Does not abolish derepression of GCN4 translation and amino acid biosynthetic genes in amino acid-starved cells." evidence="23">
    <original>K</original>
    <variation>A</variation>
    <location>
        <position position="629"/>
    </location>
</feature>
<feature type="mutagenesis site" description="Increases the constitutive kinase activity and induces derepression of GCN4 translation and amino acid biosynthetic genes in absence of amino acid starvation." evidence="13">
    <original>F</original>
    <variation>S</variation>
    <location>
        <position position="716"/>
    </location>
</feature>
<feature type="mutagenesis site" description="Increases the constitutive kinase activity and induces derepression of GCN4 translation and amino acid biosynthetic genes in absence of amino acid starvation." evidence="13">
    <original>M</original>
    <variation>V</variation>
    <location>
        <position position="788"/>
    </location>
</feature>
<feature type="mutagenesis site" description="Constitutively active allele, bypass the tRNA binding-requirement for kinase activity." evidence="15">
    <original>R</original>
    <variation>G</variation>
    <location>
        <position position="794"/>
    </location>
</feature>
<feature type="mutagenesis site" description="Increases tRNA binding and the constitutive kinase activity and induces derepression of GCN4 translation and amino acid biosynthetic genes in absence of amino acid starvation." evidence="9 13">
    <original>E</original>
    <variation>V</variation>
    <location>
        <position position="803"/>
    </location>
</feature>
<feature type="mutagenesis site" description="Increases the constitutive kinase activity and induces derepression of GCN4 translation and amino acid biosynthetic genes in absence of amino acid starvation." evidence="13 20">
    <original>E</original>
    <variation>K</variation>
    <location>
        <position position="821"/>
    </location>
</feature>
<feature type="mutagenesis site" description="Loss of function." evidence="15">
    <original>D</original>
    <variation>N</variation>
    <location>
        <position position="835"/>
    </location>
</feature>
<feature type="mutagenesis site" description="Increases the constitutive kinase activity and induces derepression of GCN4 translation and amino acid biosynthetic genes in absence of amino acid starvation." evidence="13">
    <original>H</original>
    <variation>Y</variation>
    <location>
        <position position="861"/>
    </location>
</feature>
<feature type="mutagenesis site" description="Partially impairs kinase activity." evidence="30">
    <original>T</original>
    <variation>A</variation>
    <variation>E</variation>
    <variation>D</variation>
    <location>
        <position position="882"/>
    </location>
</feature>
<feature type="mutagenesis site" description="No effect." evidence="30">
    <original>T</original>
    <variation>S</variation>
    <location>
        <position position="882"/>
    </location>
</feature>
<feature type="mutagenesis site" description="Completely abolishes kinase activity." evidence="30">
    <original>T</original>
    <variation>A</variation>
    <variation>E</variation>
    <variation>D</variation>
    <location>
        <position position="887"/>
    </location>
</feature>
<feature type="mutagenesis site" description="Partially impairs kinase activity." evidence="30">
    <original>T</original>
    <variation>S</variation>
    <location>
        <position position="887"/>
    </location>
</feature>
<feature type="mutagenesis site" description="Inhibits dimerization; when associated with A-1088 and A-1090." evidence="11">
    <original>V</original>
    <variation>A</variation>
    <location>
        <position position="1080"/>
    </location>
</feature>
<feature type="mutagenesis site" description="Inhibits dimerization; when associated with A-1080 and A-1090." evidence="11">
    <original>L</original>
    <variation>A</variation>
    <location>
        <position position="1088"/>
    </location>
</feature>
<feature type="mutagenesis site" description="Inhibits dimerization; when associated with A-1080 and A-1088." evidence="11">
    <original>L</original>
    <variation>A</variation>
    <location>
        <position position="1090"/>
    </location>
</feature>
<feature type="mutagenesis site" description="Inhibits binding to uncharged tRNAs, decreases eIF-2-alpha kinase activity and derepression of GCN4 translation and amino acid biosynthetic genes in amino acid-starved cells; when associated with L-1120." evidence="9 26 28">
    <original>Y</original>
    <variation>L</variation>
    <location>
        <position position="1119"/>
    </location>
</feature>
<feature type="mutagenesis site" description="Inhibits binding to uncharged tRNAs, decreases eIF-2-alpha kinase activity and derepression of GCN4 translation and amino acid biosynthetic genes in amino acid-starved cells; when associated with L-1119." evidence="9 26 28">
    <original>R</original>
    <variation>L</variation>
    <location>
        <position position="1120"/>
    </location>
</feature>
<feature type="mutagenesis site" description="Increases the constitutive kinase activity and induces derepression of GCN4 translation and amino acid biosynthetic genes in absence of amino acid starvation." evidence="13">
    <original>F</original>
    <variation>L</variation>
    <location>
        <position position="1134"/>
    </location>
</feature>
<feature type="mutagenesis site" description="Increases the constitutive kinase activity and induces derepression of GCN4 translation and amino acid biosynthetic genes in absence of amino acid starvation." evidence="13">
    <original>D</original>
    <variation>N</variation>
    <location>
        <position position="1138"/>
    </location>
</feature>
<feature type="mutagenesis site" description="Increases the constitutive kinase activity and induces derepression of GCN4 translation and amino acid biosynthetic genes in absence of amino acid starvation." evidence="13">
    <original>A</original>
    <variation>G</variation>
    <location>
        <position position="1197"/>
    </location>
</feature>
<feature type="mutagenesis site" description="Increases the constitutive kinase activity and induces derepression of GCN4 translation and amino acid biosynthetic genes in absence of amino acid starvation." evidence="13">
    <original>H</original>
    <variation>Y</variation>
    <location>
        <position position="1308"/>
    </location>
</feature>
<feature type="mutagenesis site" description="Increases the constitutive kinase activity and induces derepression of GCN4 translation and amino acid biosynthetic genes in absence of amino acid starvation." evidence="13">
    <original>G</original>
    <variation>D</variation>
    <location>
        <position position="1338"/>
    </location>
</feature>
<feature type="mutagenesis site" description="Fails to derepress of GCN4 translation and amino acid biosynthetic genes in amino acid-starved cells and does not inhibit autophosphorylation." evidence="29">
    <original>KKANK</original>
    <variation>LLANI</variation>
    <location>
        <begin position="1552"/>
        <end position="1556"/>
    </location>
</feature>
<feature type="mutagenesis site" description="Reduces interaction with TIF11, Inhibits binding to uncharged tRNAs, reduces autophosphorylation, eIF-2-alpha kinase activity and ribosome association, but not dimerization; when associated with I-1553 and I-1556." evidence="9 19">
    <original>K</original>
    <variation>L</variation>
    <location>
        <position position="1552"/>
    </location>
</feature>
<feature type="mutagenesis site" description="Reduces interaction with TIF11, Inhibits binding to uncharged tRNAs, reduces autophosphorylation, eIF-2-alpha kinase activity and ribosome association, but not dimerization; when associated with L-1552 and I-1556." evidence="9 19">
    <original>K</original>
    <variation>I</variation>
    <location>
        <position position="1553"/>
    </location>
</feature>
<feature type="mutagenesis site" description="Reduces interaction with TIF11, Inhibits binding to uncharged tRNAs, reduces autophosphorylation, eIF-2-alpha kinase activity and ribosome association, but not dimerization; when associated with L-1552 and I-1553." evidence="9 19">
    <original>K</original>
    <variation>I</variation>
    <location>
        <position position="1556"/>
    </location>
</feature>
<feature type="mutagenesis site" description="Increases the constitutive kinase activity and induces derepression of GCN4 translation and amino acid biosynthetic genes in absence of amino acid starvation." evidence="13">
    <original>R</original>
    <variation>K</variation>
    <location>
        <position position="1557"/>
    </location>
</feature>
<feature type="mutagenesis site" description="Increases the constitutive kinase activity and induces derepression of GCN4 translation and amino acid biosynthetic genes in absence of amino acid starvation." evidence="13">
    <original>E</original>
    <variation>K</variation>
    <location>
        <position position="1591"/>
    </location>
</feature>
<feature type="mutagenesis site" description="Increases the constitutive kinase activity and induces derepression of GCN4 translation and amino acid biosynthetic genes in absence of amino acid starvation." evidence="13 20">
    <original>E</original>
    <variation>K</variation>
    <location>
        <position position="1606"/>
    </location>
</feature>
<feature type="sequence conflict" description="In Ref. 4; AAA34881." evidence="32" ref="4">
    <original>M</original>
    <variation>I</variation>
    <location>
        <position position="70"/>
    </location>
</feature>
<feature type="sequence conflict" description="In Ref. 4; AAA34881." evidence="32" ref="4">
    <original>TIKAKLP</original>
    <variation>NYKGKIA</variation>
    <location>
        <begin position="220"/>
        <end position="226"/>
    </location>
</feature>
<feature type="sequence conflict" description="In Ref. 4; AAA34881." evidence="32" ref="4">
    <original>LMSSEMMEN</original>
    <variation>YVFSNHGKS</variation>
    <location>
        <begin position="271"/>
        <end position="279"/>
    </location>
</feature>
<feature type="sequence conflict" description="In Ref. 4; AAA34881." evidence="32" ref="4">
    <original>M</original>
    <variation>I</variation>
    <location>
        <position position="374"/>
    </location>
</feature>
<feature type="sequence conflict" description="In Ref. 4; AAA34881." evidence="32" ref="4">
    <original>K</original>
    <variation>Q</variation>
    <location>
        <position position="392"/>
    </location>
</feature>
<feature type="sequence conflict" description="In Ref. 4; AAA34881." evidence="32" ref="4">
    <original>N</original>
    <variation>S</variation>
    <location>
        <position position="395"/>
    </location>
</feature>
<feature type="sequence conflict" description="In Ref. 4; AAA34881." evidence="32" ref="4">
    <original>F</original>
    <variation>C</variation>
    <location>
        <position position="407"/>
    </location>
</feature>
<feature type="sequence conflict" description="In Ref. 4; AAA34881." evidence="32" ref="4">
    <original>IPK</original>
    <variation>MPE</variation>
    <location>
        <begin position="411"/>
        <end position="413"/>
    </location>
</feature>
<feature type="sequence conflict" description="In Ref. 4; AAA34881." evidence="32" ref="4">
    <original>I</original>
    <variation>M</variation>
    <location>
        <position position="475"/>
    </location>
</feature>
<feature type="sequence conflict" description="In Ref. 4; AAA34881." evidence="32" ref="4">
    <original>P</original>
    <variation>A</variation>
    <location>
        <position position="589"/>
    </location>
</feature>
<feature type="sequence conflict" description="In Ref. 4; AAA34881." evidence="32" ref="4">
    <original>VL</original>
    <variation>FS</variation>
    <location>
        <begin position="604"/>
        <end position="605"/>
    </location>
</feature>
<feature type="sequence conflict" description="In Ref. 4; AAA34881." evidence="32" ref="4">
    <original>S</original>
    <variation>T</variation>
    <location>
        <position position="622"/>
    </location>
</feature>
<feature type="sequence conflict" description="In Ref. 4; AAA34881." evidence="32" ref="4">
    <original>IL</original>
    <variation>MI</variation>
    <location>
        <begin position="640"/>
        <end position="641"/>
    </location>
</feature>
<feature type="sequence conflict" description="In Ref. 4; AAA34881." evidence="32" ref="4">
    <original>F</original>
    <variation>C</variation>
    <location>
        <position position="727"/>
    </location>
</feature>
<feature type="sequence conflict" description="In Ref. 4; AAA34881." evidence="32" ref="4">
    <original>M</original>
    <variation>K</variation>
    <location>
        <position position="839"/>
    </location>
</feature>
<feature type="sequence conflict" description="In Ref. 4; AAA34881." evidence="32" ref="4">
    <original>E</original>
    <variation>Q</variation>
    <location>
        <position position="954"/>
    </location>
</feature>
<feature type="sequence conflict" description="In Ref. 4; AAA34881." evidence="32" ref="4">
    <original>K</original>
    <variation>E</variation>
    <location>
        <position position="1144"/>
    </location>
</feature>
<feature type="sequence conflict" description="In Ref. 4; AAA34881." evidence="32" ref="4">
    <original>TLIS</original>
    <variation>RFHT</variation>
    <location>
        <begin position="1328"/>
        <end position="1331"/>
    </location>
</feature>
<feature type="sequence conflict" description="In Ref. 4; AAA34881." evidence="32" ref="4">
    <original>V</original>
    <variation>A</variation>
    <location>
        <position position="1348"/>
    </location>
</feature>
<feature type="sequence conflict" description="In Ref. 4; AAA34881." evidence="32" ref="4">
    <original>T</original>
    <variation>I</variation>
    <location>
        <position position="1356"/>
    </location>
</feature>
<feature type="sequence conflict" description="In Ref. 4; AAA34881." evidence="32" ref="4">
    <original>V</original>
    <variation>I</variation>
    <location>
        <position position="1434"/>
    </location>
</feature>
<feature type="strand" evidence="38">
    <location>
        <begin position="4"/>
        <end position="6"/>
    </location>
</feature>
<feature type="helix" evidence="38">
    <location>
        <begin position="8"/>
        <end position="23"/>
    </location>
</feature>
<feature type="strand" evidence="38">
    <location>
        <begin position="26"/>
        <end position="31"/>
    </location>
</feature>
<feature type="strand" evidence="38">
    <location>
        <begin position="37"/>
        <end position="40"/>
    </location>
</feature>
<feature type="strand" evidence="38">
    <location>
        <begin position="48"/>
        <end position="53"/>
    </location>
</feature>
<feature type="strand" evidence="38">
    <location>
        <begin position="63"/>
        <end position="69"/>
    </location>
</feature>
<feature type="strand" evidence="38">
    <location>
        <begin position="80"/>
        <end position="84"/>
    </location>
</feature>
<feature type="helix" evidence="38">
    <location>
        <begin position="92"/>
        <end position="107"/>
    </location>
</feature>
<feature type="helix" evidence="38">
    <location>
        <begin position="114"/>
        <end position="130"/>
    </location>
</feature>
<feature type="helix" evidence="36">
    <location>
        <begin position="594"/>
        <end position="598"/>
    </location>
</feature>
<feature type="strand" evidence="36">
    <location>
        <begin position="599"/>
        <end position="607"/>
    </location>
</feature>
<feature type="strand" evidence="36">
    <location>
        <begin position="609"/>
        <end position="618"/>
    </location>
</feature>
<feature type="turn" evidence="36">
    <location>
        <begin position="619"/>
        <end position="621"/>
    </location>
</feature>
<feature type="strand" evidence="36">
    <location>
        <begin position="624"/>
        <end position="633"/>
    </location>
</feature>
<feature type="helix" evidence="36">
    <location>
        <begin position="634"/>
        <end position="647"/>
    </location>
</feature>
<feature type="strand" evidence="37">
    <location>
        <begin position="653"/>
        <end position="655"/>
    </location>
</feature>
<feature type="strand" evidence="36">
    <location>
        <begin position="658"/>
        <end position="664"/>
    </location>
</feature>
<feature type="strand" evidence="36">
    <location>
        <begin position="781"/>
        <end position="789"/>
    </location>
</feature>
<feature type="helix" evidence="36">
    <location>
        <begin position="796"/>
        <end position="802"/>
    </location>
</feature>
<feature type="helix" evidence="36">
    <location>
        <begin position="805"/>
        <end position="807"/>
    </location>
</feature>
<feature type="helix" evidence="36">
    <location>
        <begin position="809"/>
        <end position="828"/>
    </location>
</feature>
<feature type="helix" evidence="36">
    <location>
        <begin position="838"/>
        <end position="840"/>
    </location>
</feature>
<feature type="strand" evidence="36">
    <location>
        <begin position="841"/>
        <end position="843"/>
    </location>
</feature>
<feature type="strand" evidence="36">
    <location>
        <begin position="849"/>
        <end position="851"/>
    </location>
</feature>
<feature type="helix" evidence="35">
    <location>
        <begin position="888"/>
        <end position="890"/>
    </location>
</feature>
<feature type="helix" evidence="36">
    <location>
        <begin position="893"/>
        <end position="896"/>
    </location>
</feature>
<feature type="helix" evidence="36">
    <location>
        <begin position="905"/>
        <end position="919"/>
    </location>
</feature>
<feature type="helix" evidence="36">
    <location>
        <begin position="925"/>
        <end position="936"/>
    </location>
</feature>
<feature type="turn" evidence="36">
    <location>
        <begin position="948"/>
        <end position="950"/>
    </location>
</feature>
<feature type="helix" evidence="36">
    <location>
        <begin position="952"/>
        <end position="961"/>
    </location>
</feature>
<feature type="helix" evidence="36">
    <location>
        <begin position="966"/>
        <end position="968"/>
    </location>
</feature>
<feature type="helix" evidence="36">
    <location>
        <begin position="972"/>
        <end position="977"/>
    </location>
</feature>
<feature type="helix" evidence="36">
    <location>
        <begin position="986"/>
        <end position="995"/>
    </location>
</feature>
<feature type="strand" evidence="39">
    <location>
        <begin position="1541"/>
        <end position="1543"/>
    </location>
</feature>
<feature type="strand" evidence="39">
    <location>
        <begin position="1551"/>
        <end position="1553"/>
    </location>
</feature>
<feature type="helix" evidence="39">
    <location>
        <begin position="1560"/>
        <end position="1577"/>
    </location>
</feature>
<feature type="strand" evidence="39">
    <location>
        <begin position="1582"/>
        <end position="1586"/>
    </location>
</feature>
<feature type="helix" evidence="39">
    <location>
        <begin position="1590"/>
        <end position="1598"/>
    </location>
</feature>
<feature type="strand" evidence="39">
    <location>
        <begin position="1601"/>
        <end position="1603"/>
    </location>
</feature>
<feature type="helix" evidence="39">
    <location>
        <begin position="1604"/>
        <end position="1612"/>
    </location>
</feature>
<feature type="helix" evidence="39">
    <location>
        <begin position="1615"/>
        <end position="1617"/>
    </location>
</feature>
<feature type="helix" evidence="39">
    <location>
        <begin position="1621"/>
        <end position="1636"/>
    </location>
</feature>
<feature type="strand" evidence="39">
    <location>
        <begin position="1641"/>
        <end position="1646"/>
    </location>
</feature>
<feature type="turn" evidence="39">
    <location>
        <begin position="1647"/>
        <end position="1649"/>
    </location>
</feature>
<feature type="strand" evidence="39">
    <location>
        <begin position="1652"/>
        <end position="1656"/>
    </location>
</feature>
<keyword id="KW-0002">3D-structure</keyword>
<keyword id="KW-0010">Activator</keyword>
<keyword id="KW-0067">ATP-binding</keyword>
<keyword id="KW-0963">Cytoplasm</keyword>
<keyword id="KW-0418">Kinase</keyword>
<keyword id="KW-0547">Nucleotide-binding</keyword>
<keyword id="KW-0597">Phosphoprotein</keyword>
<keyword id="KW-0648">Protein biosynthesis</keyword>
<keyword id="KW-1185">Reference proteome</keyword>
<keyword id="KW-0677">Repeat</keyword>
<keyword id="KW-0694">RNA-binding</keyword>
<keyword id="KW-0723">Serine/threonine-protein kinase</keyword>
<keyword id="KW-0346">Stress response</keyword>
<keyword id="KW-0808">Transferase</keyword>
<keyword id="KW-0810">Translation regulation</keyword>
<keyword id="KW-0820">tRNA-binding</keyword>
<reference key="1">
    <citation type="journal article" date="1989" name="Proc. Natl. Acad. Sci. U.S.A.">
        <title>Juxtaposition of domains homologous to protein kinases and histidyl-tRNA synthetases in GCN2 protein suggests a mechanism for coupling GCN4 expression to amino acid availability.</title>
        <authorList>
            <person name="Wek R.C."/>
            <person name="Jackson B.M."/>
            <person name="Hinnebusch A.G."/>
        </authorList>
    </citation>
    <scope>NUCLEOTIDE SEQUENCE [GENOMIC DNA]</scope>
    <scope>FUNCTION</scope>
    <scope>MUTAGENESIS OF LYS-628 AND LYS-629</scope>
</reference>
<reference key="2">
    <citation type="journal article" date="1997" name="Nature">
        <title>The nucleotide sequence of Saccharomyces cerevisiae chromosome IV.</title>
        <authorList>
            <person name="Jacq C."/>
            <person name="Alt-Moerbe J."/>
            <person name="Andre B."/>
            <person name="Arnold W."/>
            <person name="Bahr A."/>
            <person name="Ballesta J.P.G."/>
            <person name="Bargues M."/>
            <person name="Baron L."/>
            <person name="Becker A."/>
            <person name="Biteau N."/>
            <person name="Bloecker H."/>
            <person name="Blugeon C."/>
            <person name="Boskovic J."/>
            <person name="Brandt P."/>
            <person name="Brueckner M."/>
            <person name="Buitrago M.J."/>
            <person name="Coster F."/>
            <person name="Delaveau T."/>
            <person name="del Rey F."/>
            <person name="Dujon B."/>
            <person name="Eide L.G."/>
            <person name="Garcia-Cantalejo J.M."/>
            <person name="Goffeau A."/>
            <person name="Gomez-Peris A."/>
            <person name="Granotier C."/>
            <person name="Hanemann V."/>
            <person name="Hankeln T."/>
            <person name="Hoheisel J.D."/>
            <person name="Jaeger W."/>
            <person name="Jimenez A."/>
            <person name="Jonniaux J.-L."/>
            <person name="Kraemer C."/>
            <person name="Kuester H."/>
            <person name="Laamanen P."/>
            <person name="Legros Y."/>
            <person name="Louis E.J."/>
            <person name="Moeller-Rieker S."/>
            <person name="Monnet A."/>
            <person name="Moro M."/>
            <person name="Mueller-Auer S."/>
            <person name="Nussbaumer B."/>
            <person name="Paricio N."/>
            <person name="Paulin L."/>
            <person name="Perea J."/>
            <person name="Perez-Alonso M."/>
            <person name="Perez-Ortin J.E."/>
            <person name="Pohl T.M."/>
            <person name="Prydz H."/>
            <person name="Purnelle B."/>
            <person name="Rasmussen S.W."/>
            <person name="Remacha M.A."/>
            <person name="Revuelta J.L."/>
            <person name="Rieger M."/>
            <person name="Salom D."/>
            <person name="Saluz H.P."/>
            <person name="Saiz J.E."/>
            <person name="Saren A.-M."/>
            <person name="Schaefer M."/>
            <person name="Scharfe M."/>
            <person name="Schmidt E.R."/>
            <person name="Schneider C."/>
            <person name="Scholler P."/>
            <person name="Schwarz S."/>
            <person name="Soler-Mira A."/>
            <person name="Urrestarazu L.A."/>
            <person name="Verhasselt P."/>
            <person name="Vissers S."/>
            <person name="Voet M."/>
            <person name="Volckaert G."/>
            <person name="Wagner G."/>
            <person name="Wambutt R."/>
            <person name="Wedler E."/>
            <person name="Wedler H."/>
            <person name="Woelfl S."/>
            <person name="Harris D.E."/>
            <person name="Bowman S."/>
            <person name="Brown D."/>
            <person name="Churcher C.M."/>
            <person name="Connor R."/>
            <person name="Dedman K."/>
            <person name="Gentles S."/>
            <person name="Hamlin N."/>
            <person name="Hunt S."/>
            <person name="Jones L."/>
            <person name="McDonald S."/>
            <person name="Murphy L.D."/>
            <person name="Niblett D."/>
            <person name="Odell C."/>
            <person name="Oliver K."/>
            <person name="Rajandream M.A."/>
            <person name="Richards C."/>
            <person name="Shore L."/>
            <person name="Walsh S.V."/>
            <person name="Barrell B.G."/>
            <person name="Dietrich F.S."/>
            <person name="Mulligan J.T."/>
            <person name="Allen E."/>
            <person name="Araujo R."/>
            <person name="Aviles E."/>
            <person name="Berno A."/>
            <person name="Carpenter J."/>
            <person name="Chen E."/>
            <person name="Cherry J.M."/>
            <person name="Chung E."/>
            <person name="Duncan M."/>
            <person name="Hunicke-Smith S."/>
            <person name="Hyman R.W."/>
            <person name="Komp C."/>
            <person name="Lashkari D."/>
            <person name="Lew H."/>
            <person name="Lin D."/>
            <person name="Mosedale D."/>
            <person name="Nakahara K."/>
            <person name="Namath A."/>
            <person name="Oefner P."/>
            <person name="Oh C."/>
            <person name="Petel F.X."/>
            <person name="Roberts D."/>
            <person name="Schramm S."/>
            <person name="Schroeder M."/>
            <person name="Shogren T."/>
            <person name="Shroff N."/>
            <person name="Winant A."/>
            <person name="Yelton M.A."/>
            <person name="Botstein D."/>
            <person name="Davis R.W."/>
            <person name="Johnston M."/>
            <person name="Andrews S."/>
            <person name="Brinkman R."/>
            <person name="Cooper J."/>
            <person name="Ding H."/>
            <person name="Du Z."/>
            <person name="Favello A."/>
            <person name="Fulton L."/>
            <person name="Gattung S."/>
            <person name="Greco T."/>
            <person name="Hallsworth K."/>
            <person name="Hawkins J."/>
            <person name="Hillier L.W."/>
            <person name="Jier M."/>
            <person name="Johnson D."/>
            <person name="Johnston L."/>
            <person name="Kirsten J."/>
            <person name="Kucaba T."/>
            <person name="Langston Y."/>
            <person name="Latreille P."/>
            <person name="Le T."/>
            <person name="Mardis E."/>
            <person name="Menezes S."/>
            <person name="Miller N."/>
            <person name="Nhan M."/>
            <person name="Pauley A."/>
            <person name="Peluso D."/>
            <person name="Rifkin L."/>
            <person name="Riles L."/>
            <person name="Taich A."/>
            <person name="Trevaskis E."/>
            <person name="Vignati D."/>
            <person name="Wilcox L."/>
            <person name="Wohldman P."/>
            <person name="Vaudin M."/>
            <person name="Wilson R."/>
            <person name="Waterston R."/>
            <person name="Albermann K."/>
            <person name="Hani J."/>
            <person name="Heumann K."/>
            <person name="Kleine K."/>
            <person name="Mewes H.-W."/>
            <person name="Zollner A."/>
            <person name="Zaccaria P."/>
        </authorList>
    </citation>
    <scope>NUCLEOTIDE SEQUENCE [LARGE SCALE GENOMIC DNA]</scope>
    <source>
        <strain>ATCC 204508 / S288c</strain>
    </source>
</reference>
<reference key="3">
    <citation type="journal article" date="2014" name="G3 (Bethesda)">
        <title>The reference genome sequence of Saccharomyces cerevisiae: Then and now.</title>
        <authorList>
            <person name="Engel S.R."/>
            <person name="Dietrich F.S."/>
            <person name="Fisk D.G."/>
            <person name="Binkley G."/>
            <person name="Balakrishnan R."/>
            <person name="Costanzo M.C."/>
            <person name="Dwight S.S."/>
            <person name="Hitz B.C."/>
            <person name="Karra K."/>
            <person name="Nash R.S."/>
            <person name="Weng S."/>
            <person name="Wong E.D."/>
            <person name="Lloyd P."/>
            <person name="Skrzypek M.S."/>
            <person name="Miyasato S.R."/>
            <person name="Simison M."/>
            <person name="Cherry J.M."/>
        </authorList>
    </citation>
    <scope>GENOME REANNOTATION</scope>
    <source>
        <strain>ATCC 204508 / S288c</strain>
    </source>
</reference>
<reference key="4">
    <citation type="journal article" date="1988" name="Mol. Cell. Biol.">
        <title>Transcriptional-translational regulatory circuit in Saccharomyces cerevisiae which involves the GCN4 transcriptional activator and the GCN2 protein kinase.</title>
        <authorList>
            <person name="Roussou I."/>
            <person name="Thireos G."/>
            <person name="Hauge B.M."/>
        </authorList>
    </citation>
    <scope>NUCLEOTIDE SEQUENCE [GENOMIC DNA] OF 1-1481</scope>
    <source>
        <strain>ATCC 204508 / S288c</strain>
    </source>
</reference>
<reference key="5">
    <citation type="journal article" date="1990" name="Mol. Cell. Biol.">
        <title>Identification of positive-acting domains in GCN2 protein kinase required for translational activation of GCN4 expression.</title>
        <authorList>
            <person name="Wek R.C."/>
            <person name="Ramirez M."/>
            <person name="Jackson B.M."/>
            <person name="Hinnebusch A.G."/>
        </authorList>
    </citation>
    <scope>FUNCTION</scope>
    <scope>CATALYTIC ACTIVITY</scope>
    <scope>AUTOPHOSPHORYLATION</scope>
    <scope>MUTAGENESIS OF GLU-601; LYS-628; GLU-821 AND GLU-1606</scope>
</reference>
<reference key="6">
    <citation type="journal article" date="1991" name="Mol. Cell. Biol.">
        <title>Ribosome association of GCN2 protein kinase, a translational activator of the GCN4 gene of Saccharomyces cerevisiae.</title>
        <authorList>
            <person name="Ramirez M."/>
            <person name="Wek R.C."/>
            <person name="Hinnebusch A.G."/>
        </authorList>
    </citation>
    <scope>ASSOCIATION WITH RIBOSOMES</scope>
    <scope>AUTOPHOSPHORYLATION</scope>
    <scope>SUBCELLULAR LOCATION</scope>
</reference>
<reference key="7">
    <citation type="journal article" date="1992" name="Cell">
        <title>Phosphorylation of initiation factor 2 alpha by protein kinase GCN2 mediates gene-specific translational control of GCN4 in yeast.</title>
        <authorList>
            <person name="Dever T.E."/>
            <person name="Feng L."/>
            <person name="Wek R.C."/>
            <person name="Cigan A.M."/>
            <person name="Donahue T.F."/>
            <person name="Hinnebusch A.G."/>
        </authorList>
    </citation>
    <scope>FUNCTION</scope>
    <scope>MUTAGENESIS OF LYS-628</scope>
</reference>
<reference key="8">
    <citation type="journal article" date="1992" name="Mol. Cell. Biol.">
        <title>Mutations activating the yeast eIF-2 alpha kinase GCN2: isolation of alleles altering the domain related to histidyl-tRNA synthetases.</title>
        <authorList>
            <person name="Ramirez M."/>
            <person name="Wek R.C."/>
            <person name="Vazquez de Aldana C.R."/>
            <person name="Jackson B.M."/>
            <person name="Freeman B."/>
            <person name="Hinnebusch A.G."/>
        </authorList>
    </citation>
    <scope>MUTAGENESIS OF SER-582; PHE-716; MET-788; GLU-803; GLU-821; HIS-861; PHE-1134; ASP-1138; ALA-1197; HIS-1308; GLY-1338; ARG-1557; GLU-1591 AND GLU-1606</scope>
</reference>
<reference key="9">
    <citation type="journal article" date="1993" name="Mol. Cell. Biol.">
        <title>Translation of the yeast transcriptional activator GCN4 is stimulated by purine limitation: implications for activation of the protein kinase GCN2.</title>
        <authorList>
            <person name="Rolfes R.J."/>
            <person name="Hinnebusch A.G."/>
        </authorList>
    </citation>
    <scope>FUNCTION</scope>
    <scope>DISRUPTION PHENOTYPE</scope>
</reference>
<reference key="10">
    <citation type="journal article" date="1995" name="EMBO J.">
        <title>GCN20, a novel ATP binding cassette protein, and GCN1 reside in a complex that mediates activation of the eIF-2 alpha kinase GCN2 in amino acid-starved cells.</title>
        <authorList>
            <person name="Vazquez de Aldana C.R."/>
            <person name="Marton M.J."/>
            <person name="Hinnebusch A.G."/>
        </authorList>
    </citation>
    <scope>FUNCTION</scope>
</reference>
<reference key="11">
    <citation type="journal article" date="1995" name="Mol. Cell. Biol.">
        <title>The histidyl-tRNA synthetase-related sequence in the eIF-2 alpha protein kinase GCN2 interacts with tRNA and is required for activation in response to starvation for different amino acids.</title>
        <authorList>
            <person name="Wek S.A."/>
            <person name="Zhu S."/>
            <person name="Wek R.C."/>
        </authorList>
    </citation>
    <scope>FUNCTION</scope>
    <scope>CATALYTIC ACTIVITY</scope>
    <scope>ACTIVITY REGULATION</scope>
    <scope>TRNA-BINDING</scope>
    <scope>DOMAIN</scope>
    <scope>MUTAGENESIS OF TYR-1119 AND ARG-1120</scope>
</reference>
<reference key="12">
    <citation type="journal article" date="1996" name="J. Biol. Chem.">
        <title>Histidyl-tRNA synthetase-related sequences in GCN2 protein kinase regulate in vitro phosphorylation of eIF-2.</title>
        <authorList>
            <person name="Zhu S."/>
            <person name="Sobolev A.Y."/>
            <person name="Wek R.C."/>
        </authorList>
    </citation>
    <scope>FUNCTION</scope>
    <scope>CATALYTIC ACTIVITY</scope>
    <scope>AUTOPHOSPHORYLATION</scope>
    <scope>DOMAIN</scope>
    <scope>MUTAGENESIS OF LYS-628; TYR-1119 AND ARG-1120</scope>
</reference>
<reference key="13">
    <citation type="journal article" date="1998" name="J. Biol. Chem.">
        <title>Ribosome-binding domain of eukaryotic initiation factor-2 kinase GCN2 facilitates translation control.</title>
        <authorList>
            <person name="Zhu S."/>
            <person name="Wek R.C."/>
        </authorList>
    </citation>
    <scope>FUNCTION</scope>
    <scope>ASSOCIATION WITH RIBOSOMES</scope>
    <scope>DOMAIN</scope>
    <scope>MUTAGENESIS OF TYR-1119; ARG-1120 AND 1552-LYS--LYS-1556</scope>
</reference>
<reference key="14">
    <citation type="journal article" date="1998" name="Mol. Cell. Biol.">
        <title>Autophosphorylation in the activation loop is required for full kinase activity in vivo of human and yeast eukaryotic initiation factor 2alpha kinases PKR and GCN2.</title>
        <authorList>
            <person name="Romano P.R."/>
            <person name="Garcia-Barrio M.T."/>
            <person name="Zhang X."/>
            <person name="Wang Q."/>
            <person name="Taylor D.R."/>
            <person name="Zhang F."/>
            <person name="Herring C."/>
            <person name="Mathews M.B."/>
            <person name="Qin J."/>
            <person name="Hinnebusch A.G."/>
        </authorList>
    </citation>
    <scope>FUNCTION</scope>
    <scope>PHOSPHORYLATION AT THR-882 AND THR-887</scope>
    <scope>MUTAGENESIS OF THR-882 AND THR-887</scope>
</reference>
<reference key="15">
    <citation type="journal article" date="1998" name="Mol. Cell. Biol.">
        <title>Dimerization by translation initiation factor 2 kinase GCN2 is mediated by interactions in the C-terminal ribosome-binding region and the protein kinase domain.</title>
        <authorList>
            <person name="Qiu H."/>
            <person name="Garcia-Barrio M.T."/>
            <person name="Hinnebusch A.G."/>
        </authorList>
    </citation>
    <scope>SUBUNIT</scope>
    <scope>DOMAIN</scope>
</reference>
<reference key="16">
    <citation type="journal article" date="2000" name="EMBO J.">
        <title>Association of GCN1-GCN20 regulatory complex with the N-terminus of eIF2alpha kinase GCN2 is required for GCN2 activation.</title>
        <authorList>
            <person name="Garcia-Barrio M."/>
            <person name="Dong J."/>
            <person name="Ufano S."/>
            <person name="Hinnebusch A.G."/>
        </authorList>
    </citation>
    <scope>INTERACTION WITH GCN1</scope>
    <scope>IDENTIFICATION IN A COMPLEX WITH GCN1 AND GCN20</scope>
</reference>
<reference key="17">
    <citation type="journal article" date="2000" name="EMBO J.">
        <title>Separate domains in GCN1 for binding protein kinase GCN2 and ribosomes are required for GCN2 activation in amino acid-starved cells.</title>
        <authorList>
            <person name="Sattlegger E."/>
            <person name="Hinnebusch A.G."/>
        </authorList>
    </citation>
    <scope>INTERACTION WITH GCN1</scope>
    <scope>IDENTIFICATION IN A COMPLEX WITH GCN1 AND GCN20</scope>
</reference>
<reference key="18">
    <citation type="journal article" date="2000" name="J. Biol. Chem.">
        <title>GI domain-mediated association of the eukaryotic initiation factor 2alpha kinase GCN2 with its activator GCN1 is required for general amino acid control in budding yeast.</title>
        <authorList>
            <person name="Kubota H."/>
            <person name="Sakaki Y."/>
            <person name="Ito T."/>
        </authorList>
    </citation>
    <scope>FUNCTION</scope>
    <scope>INTERACTION WITH GCN1</scope>
    <scope>MUTAGENESIS OF TYR-74</scope>
</reference>
<reference key="19">
    <citation type="journal article" date="2000" name="Mol. Cell">
        <title>Uncharged tRNA activates GCN2 by displacing the protein kinase moiety from a bipartite tRNA-binding domain.</title>
        <authorList>
            <person name="Dong J."/>
            <person name="Qiu H."/>
            <person name="Garcia-Barrio M."/>
            <person name="Anderson J."/>
            <person name="Hinnebusch A.G."/>
        </authorList>
    </citation>
    <scope>FUNCTION</scope>
    <scope>CATALYTIC ACTIVITY</scope>
    <scope>SUBUNIT</scope>
    <scope>TRNA-BINDING</scope>
    <scope>ASSOCIATION WITH RIBOSOMES</scope>
    <scope>AUTOPHOSPHORYLATION</scope>
    <scope>DOMAIN</scope>
    <scope>MUTAGENESIS OF LYS-628; GLU-803; TYR-1119; ARG-1120; LYS-1552; LYS-1553 AND LYS-1556</scope>
</reference>
<reference key="20">
    <citation type="journal article" date="2000" name="Mol. Cell. Biol.">
        <title>Glucose limitation induces GCN4 translation by activation of Gcn2 protein kinase.</title>
        <authorList>
            <person name="Yang R."/>
            <person name="Wek S.A."/>
            <person name="Wek R.C."/>
        </authorList>
    </citation>
    <scope>FUNCTION</scope>
    <scope>DISRUPTION PHENOTYPE</scope>
    <scope>MUTAGENESIS OF LYS-628</scope>
</reference>
<reference key="21">
    <citation type="journal article" date="2001" name="EMBO J.">
        <title>The tRNA-binding moiety in GCN2 contains a dimerization domain that interacts with the kinase domain and is required for tRNA binding and kinase activation.</title>
        <authorList>
            <person name="Qiu H."/>
            <person name="Dong J."/>
            <person name="Hu C."/>
            <person name="Francklyn C.S."/>
            <person name="Hinnebusch A.G."/>
        </authorList>
    </citation>
    <scope>SUBUNIT</scope>
    <scope>DOMAIN</scope>
    <scope>MUTAGENESIS OF VAL-1080; LEU-1088 AND LEU-1090</scope>
</reference>
<reference key="22">
    <citation type="journal article" date="2001" name="J. Biol. Chem.">
        <title>Budding yeast GCN1 binds the GI domain to activate the eIF2alpha kinase GCN2.</title>
        <authorList>
            <person name="Kubota H."/>
            <person name="Ota K."/>
            <person name="Sakaki Y."/>
            <person name="Ito T."/>
        </authorList>
    </citation>
    <scope>FUNCTION</scope>
    <scope>INTERACTION WITH GCN1</scope>
    <scope>MUTAGENESIS OF TYR-74</scope>
</reference>
<reference key="23">
    <citation type="journal article" date="2003" name="Nature">
        <title>Global analysis of protein expression in yeast.</title>
        <authorList>
            <person name="Ghaemmaghami S."/>
            <person name="Huh W.-K."/>
            <person name="Bower K."/>
            <person name="Howson R.W."/>
            <person name="Belle A."/>
            <person name="Dephoure N."/>
            <person name="O'Shea E.K."/>
            <person name="Weissman J.S."/>
        </authorList>
    </citation>
    <scope>LEVEL OF PROTEIN EXPRESSION [LARGE SCALE ANALYSIS]</scope>
</reference>
<reference key="24">
    <citation type="journal article" date="2007" name="J. Biol. Chem.">
        <title>Conserved intermolecular salt bridge required for activation of protein kinases PKR, GCN2, and PERK.</title>
        <authorList>
            <person name="Dey M."/>
            <person name="Cao C."/>
            <person name="Sicheri F."/>
            <person name="Dever T.E."/>
        </authorList>
    </citation>
    <scope>FUNCTION</scope>
    <scope>CATALYTIC ACTIVITY</scope>
    <scope>COFACTOR</scope>
    <scope>SUBUNIT</scope>
    <scope>AUTOPHOSPHORYLATION</scope>
    <scope>MUTAGENESIS OF ARG-594; ASP-598 AND LYS-628</scope>
</reference>
<reference key="25">
    <citation type="journal article" date="2007" name="Proc. Natl. Acad. Sci. U.S.A.">
        <title>Analysis of phosphorylation sites on proteins from Saccharomyces cerevisiae by electron transfer dissociation (ETD) mass spectrometry.</title>
        <authorList>
            <person name="Chi A."/>
            <person name="Huttenhower C."/>
            <person name="Geer L.Y."/>
            <person name="Coon J.J."/>
            <person name="Syka J.E.P."/>
            <person name="Bai D.L."/>
            <person name="Shabanowitz J."/>
            <person name="Burke D.J."/>
            <person name="Troyanskaya O.G."/>
            <person name="Hunt D.F."/>
        </authorList>
    </citation>
    <scope>PHOSPHORYLATION [LARGE SCALE ANALYSIS] AT SER-761</scope>
    <scope>IDENTIFICATION BY MASS SPECTROMETRY [LARGE SCALE ANALYSIS]</scope>
</reference>
<reference key="26">
    <citation type="journal article" date="2008" name="Mol. Cell. Proteomics">
        <title>A multidimensional chromatography technology for in-depth phosphoproteome analysis.</title>
        <authorList>
            <person name="Albuquerque C.P."/>
            <person name="Smolka M.B."/>
            <person name="Payne S.H."/>
            <person name="Bafna V."/>
            <person name="Eng J."/>
            <person name="Zhou H."/>
        </authorList>
    </citation>
    <scope>IDENTIFICATION BY MASS SPECTROMETRY [LARGE SCALE ANALYSIS]</scope>
</reference>
<reference key="27">
    <citation type="journal article" date="2011" name="J. Biol. Chem.">
        <title>Evidence that eukaryotic translation elongation factor 1A (eEF1A) binds the Gcn2 protein C terminus and inhibits Gcn2 activity.</title>
        <authorList>
            <person name="Visweswaraiah J."/>
            <person name="Lageix S."/>
            <person name="Castilho B.A."/>
            <person name="Izotova L."/>
            <person name="Kinzy T.G."/>
            <person name="Hinnebusch A.G."/>
            <person name="Sattlegger E."/>
        </authorList>
    </citation>
    <scope>INTERACTION WITH GCN1 AND TIF11</scope>
    <scope>MUTAGENESIS OF LYS-1552; LYS-1553 AND LYS-1556</scope>
</reference>
<reference key="28">
    <citation type="journal article" date="2012" name="J. Biol. Chem.">
        <title>Overexpression of eukaryotic translation elongation factor 3 impairs Gcn2 protein activation.</title>
        <authorList>
            <person name="Visweswaraiah J."/>
            <person name="Lee S.J."/>
            <person name="Hinnebusch A.G."/>
            <person name="Sattlegger E."/>
        </authorList>
    </citation>
    <scope>ASSOCIATION WITH RIBOSOMES</scope>
</reference>
<reference key="29">
    <citation type="journal article" date="2014" name="Biochem. Biophys. Res. Commun.">
        <title>Evolutionarily conserved IMPACT impairs various stress responses that require GCN1 for activating the eIF2 kinase GCN2.</title>
        <authorList>
            <person name="Cambiaghi T.D."/>
            <person name="Pereira C.M."/>
            <person name="Shanmugam R."/>
            <person name="Bolech M."/>
            <person name="Wek R.C."/>
            <person name="Sattlegger E."/>
            <person name="Castilho B.A."/>
        </authorList>
    </citation>
    <scope>FUNCTION</scope>
</reference>
<reference key="30">
    <citation type="journal article" date="2021" name="Mol. Cell">
        <title>Ribosome quality control antagonizes the activation of the integrated stress response on colliding ribosomes.</title>
        <authorList>
            <person name="Yan L.L."/>
            <person name="Zaher H.S."/>
        </authorList>
    </citation>
    <scope>FUNCTION</scope>
    <scope>ACTIVITY REGULATION</scope>
</reference>
<reference key="31">
    <citation type="journal article" date="2005" name="J. Biol. Chem.">
        <title>Structural basis for autoinhibition and mutational activation of eukaryotic initiation factor 2alpha protein kinase GCN2.</title>
        <authorList>
            <person name="Padyana A.K."/>
            <person name="Qiu H."/>
            <person name="Roll-Mecak A."/>
            <person name="Hinnebusch A.G."/>
            <person name="Burley S.K."/>
        </authorList>
    </citation>
    <scope>X-RAY CRYSTALLOGRAPHY (1.95 ANGSTROMS) OF 594-664 AND 768-997 OF WILD-TYPE AND MUTANTS GLY-794 AND ASN-835 IN COMPLEX WITH ATP</scope>
    <scope>SUBUNIT</scope>
</reference>